<evidence type="ECO:0000250" key="1"/>
<evidence type="ECO:0000255" key="2">
    <source>
        <dbReference type="HAMAP-Rule" id="MF_01210"/>
    </source>
</evidence>
<comment type="function">
    <text evidence="2">Large subunit of the glutamine-dependent carbamoyl phosphate synthetase (CPSase). CPSase catalyzes the formation of carbamoyl phosphate from the ammonia moiety of glutamine, carbonate, and phosphate donated by ATP, constituting the first step of 2 biosynthetic pathways, one leading to arginine and/or urea and the other to pyrimidine nucleotides. The large subunit (synthetase) binds the substrates ammonia (free or transferred from glutamine from the small subunit), hydrogencarbonate and ATP and carries out an ATP-coupled ligase reaction, activating hydrogencarbonate by forming carboxy phosphate which reacts with ammonia to form carbamoyl phosphate.</text>
</comment>
<comment type="catalytic activity">
    <reaction evidence="2">
        <text>hydrogencarbonate + L-glutamine + 2 ATP + H2O = carbamoyl phosphate + L-glutamate + 2 ADP + phosphate + 2 H(+)</text>
        <dbReference type="Rhea" id="RHEA:18633"/>
        <dbReference type="ChEBI" id="CHEBI:15377"/>
        <dbReference type="ChEBI" id="CHEBI:15378"/>
        <dbReference type="ChEBI" id="CHEBI:17544"/>
        <dbReference type="ChEBI" id="CHEBI:29985"/>
        <dbReference type="ChEBI" id="CHEBI:30616"/>
        <dbReference type="ChEBI" id="CHEBI:43474"/>
        <dbReference type="ChEBI" id="CHEBI:58228"/>
        <dbReference type="ChEBI" id="CHEBI:58359"/>
        <dbReference type="ChEBI" id="CHEBI:456216"/>
        <dbReference type="EC" id="6.3.5.5"/>
    </reaction>
</comment>
<comment type="catalytic activity">
    <molecule>Carbamoyl phosphate synthase large chain</molecule>
    <reaction evidence="2">
        <text>hydrogencarbonate + NH4(+) + 2 ATP = carbamoyl phosphate + 2 ADP + phosphate + 2 H(+)</text>
        <dbReference type="Rhea" id="RHEA:18029"/>
        <dbReference type="ChEBI" id="CHEBI:15378"/>
        <dbReference type="ChEBI" id="CHEBI:17544"/>
        <dbReference type="ChEBI" id="CHEBI:28938"/>
        <dbReference type="ChEBI" id="CHEBI:30616"/>
        <dbReference type="ChEBI" id="CHEBI:43474"/>
        <dbReference type="ChEBI" id="CHEBI:58228"/>
        <dbReference type="ChEBI" id="CHEBI:456216"/>
        <dbReference type="EC" id="6.3.4.16"/>
    </reaction>
</comment>
<comment type="cofactor">
    <cofactor evidence="2">
        <name>Mg(2+)</name>
        <dbReference type="ChEBI" id="CHEBI:18420"/>
    </cofactor>
    <cofactor evidence="2">
        <name>Mn(2+)</name>
        <dbReference type="ChEBI" id="CHEBI:29035"/>
    </cofactor>
    <text evidence="2">Binds 4 Mg(2+) or Mn(2+) ions per subunit.</text>
</comment>
<comment type="pathway">
    <text evidence="2">Amino-acid biosynthesis; L-arginine biosynthesis; carbamoyl phosphate from bicarbonate: step 1/1.</text>
</comment>
<comment type="pathway">
    <text evidence="2">Pyrimidine metabolism; UMP biosynthesis via de novo pathway; (S)-dihydroorotate from bicarbonate: step 1/3.</text>
</comment>
<comment type="subunit">
    <text evidence="2">Composed of two chains; the small (or glutamine) chain promotes the hydrolysis of glutamine to ammonia, which is used by the large (or ammonia) chain to synthesize carbamoyl phosphate. Tetramer of heterodimers (alpha,beta)4.</text>
</comment>
<comment type="domain">
    <text evidence="2">The large subunit is composed of 2 ATP-grasp domains that are involved in binding the 2 ATP molecules needed for carbamoyl phosphate synthesis. The N-terminal ATP-grasp domain (referred to as the carboxyphosphate synthetic component) catalyzes the ATP-dependent phosphorylation of hydrogencarbonate to carboxyphosphate and the subsequent nucleophilic attack by ammonia to form a carbamate intermediate. The C-terminal ATP-grasp domain (referred to as the carbamoyl phosphate synthetic component) then catalyzes the phosphorylation of carbamate with the second ATP to form the end product carbamoyl phosphate. The reactive and unstable enzyme intermediates are sequentially channeled from one active site to the next through the interior of the protein over a distance of at least 96 A.</text>
</comment>
<comment type="similarity">
    <text evidence="2">Belongs to the CarB family.</text>
</comment>
<feature type="initiator methionine" description="Removed" evidence="1">
    <location>
        <position position="1"/>
    </location>
</feature>
<feature type="chain" id="PRO_0000145069" description="Carbamoyl phosphate synthase large chain">
    <location>
        <begin position="2"/>
        <end position="1077"/>
    </location>
</feature>
<feature type="domain" description="ATP-grasp 1" evidence="2">
    <location>
        <begin position="133"/>
        <end position="328"/>
    </location>
</feature>
<feature type="domain" description="ATP-grasp 2" evidence="2">
    <location>
        <begin position="679"/>
        <end position="870"/>
    </location>
</feature>
<feature type="domain" description="MGS-like" evidence="2">
    <location>
        <begin position="937"/>
        <end position="1077"/>
    </location>
</feature>
<feature type="region of interest" description="Carboxyphosphate synthetic domain" evidence="2">
    <location>
        <begin position="2"/>
        <end position="403"/>
    </location>
</feature>
<feature type="region of interest" description="Oligomerization domain" evidence="2">
    <location>
        <begin position="404"/>
        <end position="553"/>
    </location>
</feature>
<feature type="region of interest" description="Carbamoyl phosphate synthetic domain" evidence="2">
    <location>
        <begin position="554"/>
        <end position="936"/>
    </location>
</feature>
<feature type="region of interest" description="Allosteric domain" evidence="2">
    <location>
        <begin position="937"/>
        <end position="1077"/>
    </location>
</feature>
<feature type="binding site" evidence="2">
    <location>
        <position position="129"/>
    </location>
    <ligand>
        <name>ATP</name>
        <dbReference type="ChEBI" id="CHEBI:30616"/>
        <label>1</label>
    </ligand>
</feature>
<feature type="binding site" evidence="2">
    <location>
        <position position="169"/>
    </location>
    <ligand>
        <name>ATP</name>
        <dbReference type="ChEBI" id="CHEBI:30616"/>
        <label>1</label>
    </ligand>
</feature>
<feature type="binding site" evidence="2">
    <location>
        <position position="175"/>
    </location>
    <ligand>
        <name>ATP</name>
        <dbReference type="ChEBI" id="CHEBI:30616"/>
        <label>1</label>
    </ligand>
</feature>
<feature type="binding site" evidence="2">
    <location>
        <position position="176"/>
    </location>
    <ligand>
        <name>ATP</name>
        <dbReference type="ChEBI" id="CHEBI:30616"/>
        <label>1</label>
    </ligand>
</feature>
<feature type="binding site" evidence="2">
    <location>
        <position position="208"/>
    </location>
    <ligand>
        <name>ATP</name>
        <dbReference type="ChEBI" id="CHEBI:30616"/>
        <label>1</label>
    </ligand>
</feature>
<feature type="binding site" evidence="2">
    <location>
        <position position="210"/>
    </location>
    <ligand>
        <name>ATP</name>
        <dbReference type="ChEBI" id="CHEBI:30616"/>
        <label>1</label>
    </ligand>
</feature>
<feature type="binding site" evidence="2">
    <location>
        <position position="215"/>
    </location>
    <ligand>
        <name>ATP</name>
        <dbReference type="ChEBI" id="CHEBI:30616"/>
        <label>1</label>
    </ligand>
</feature>
<feature type="binding site" evidence="2">
    <location>
        <position position="241"/>
    </location>
    <ligand>
        <name>ATP</name>
        <dbReference type="ChEBI" id="CHEBI:30616"/>
        <label>1</label>
    </ligand>
</feature>
<feature type="binding site" evidence="2">
    <location>
        <position position="242"/>
    </location>
    <ligand>
        <name>ATP</name>
        <dbReference type="ChEBI" id="CHEBI:30616"/>
        <label>1</label>
    </ligand>
</feature>
<feature type="binding site" evidence="2">
    <location>
        <position position="243"/>
    </location>
    <ligand>
        <name>ATP</name>
        <dbReference type="ChEBI" id="CHEBI:30616"/>
        <label>1</label>
    </ligand>
</feature>
<feature type="binding site" evidence="2">
    <location>
        <position position="285"/>
    </location>
    <ligand>
        <name>ATP</name>
        <dbReference type="ChEBI" id="CHEBI:30616"/>
        <label>1</label>
    </ligand>
</feature>
<feature type="binding site" evidence="2">
    <location>
        <position position="285"/>
    </location>
    <ligand>
        <name>Mg(2+)</name>
        <dbReference type="ChEBI" id="CHEBI:18420"/>
        <label>1</label>
    </ligand>
</feature>
<feature type="binding site" evidence="2">
    <location>
        <position position="285"/>
    </location>
    <ligand>
        <name>Mn(2+)</name>
        <dbReference type="ChEBI" id="CHEBI:29035"/>
        <label>1</label>
    </ligand>
</feature>
<feature type="binding site" evidence="2">
    <location>
        <position position="299"/>
    </location>
    <ligand>
        <name>ATP</name>
        <dbReference type="ChEBI" id="CHEBI:30616"/>
        <label>1</label>
    </ligand>
</feature>
<feature type="binding site" evidence="2">
    <location>
        <position position="299"/>
    </location>
    <ligand>
        <name>Mg(2+)</name>
        <dbReference type="ChEBI" id="CHEBI:18420"/>
        <label>1</label>
    </ligand>
</feature>
<feature type="binding site" evidence="2">
    <location>
        <position position="299"/>
    </location>
    <ligand>
        <name>Mg(2+)</name>
        <dbReference type="ChEBI" id="CHEBI:18420"/>
        <label>2</label>
    </ligand>
</feature>
<feature type="binding site" evidence="2">
    <location>
        <position position="299"/>
    </location>
    <ligand>
        <name>Mn(2+)</name>
        <dbReference type="ChEBI" id="CHEBI:29035"/>
        <label>1</label>
    </ligand>
</feature>
<feature type="binding site" evidence="2">
    <location>
        <position position="299"/>
    </location>
    <ligand>
        <name>Mn(2+)</name>
        <dbReference type="ChEBI" id="CHEBI:29035"/>
        <label>2</label>
    </ligand>
</feature>
<feature type="binding site" evidence="2">
    <location>
        <position position="301"/>
    </location>
    <ligand>
        <name>Mg(2+)</name>
        <dbReference type="ChEBI" id="CHEBI:18420"/>
        <label>2</label>
    </ligand>
</feature>
<feature type="binding site" evidence="2">
    <location>
        <position position="301"/>
    </location>
    <ligand>
        <name>Mn(2+)</name>
        <dbReference type="ChEBI" id="CHEBI:29035"/>
        <label>2</label>
    </ligand>
</feature>
<feature type="binding site" evidence="2">
    <location>
        <position position="715"/>
    </location>
    <ligand>
        <name>ATP</name>
        <dbReference type="ChEBI" id="CHEBI:30616"/>
        <label>2</label>
    </ligand>
</feature>
<feature type="binding site" evidence="2">
    <location>
        <position position="754"/>
    </location>
    <ligand>
        <name>ATP</name>
        <dbReference type="ChEBI" id="CHEBI:30616"/>
        <label>2</label>
    </ligand>
</feature>
<feature type="binding site" evidence="2">
    <location>
        <position position="756"/>
    </location>
    <ligand>
        <name>ATP</name>
        <dbReference type="ChEBI" id="CHEBI:30616"/>
        <label>2</label>
    </ligand>
</feature>
<feature type="binding site" evidence="2">
    <location>
        <position position="761"/>
    </location>
    <ligand>
        <name>ATP</name>
        <dbReference type="ChEBI" id="CHEBI:30616"/>
        <label>2</label>
    </ligand>
</feature>
<feature type="binding site" evidence="2">
    <location>
        <position position="786"/>
    </location>
    <ligand>
        <name>ATP</name>
        <dbReference type="ChEBI" id="CHEBI:30616"/>
        <label>2</label>
    </ligand>
</feature>
<feature type="binding site" evidence="2">
    <location>
        <position position="787"/>
    </location>
    <ligand>
        <name>ATP</name>
        <dbReference type="ChEBI" id="CHEBI:30616"/>
        <label>2</label>
    </ligand>
</feature>
<feature type="binding site" evidence="2">
    <location>
        <position position="788"/>
    </location>
    <ligand>
        <name>ATP</name>
        <dbReference type="ChEBI" id="CHEBI:30616"/>
        <label>2</label>
    </ligand>
</feature>
<feature type="binding site" evidence="2">
    <location>
        <position position="789"/>
    </location>
    <ligand>
        <name>ATP</name>
        <dbReference type="ChEBI" id="CHEBI:30616"/>
        <label>2</label>
    </ligand>
</feature>
<feature type="binding site" evidence="2">
    <location>
        <position position="829"/>
    </location>
    <ligand>
        <name>ATP</name>
        <dbReference type="ChEBI" id="CHEBI:30616"/>
        <label>2</label>
    </ligand>
</feature>
<feature type="binding site" evidence="2">
    <location>
        <position position="829"/>
    </location>
    <ligand>
        <name>Mg(2+)</name>
        <dbReference type="ChEBI" id="CHEBI:18420"/>
        <label>3</label>
    </ligand>
</feature>
<feature type="binding site" evidence="2">
    <location>
        <position position="829"/>
    </location>
    <ligand>
        <name>Mn(2+)</name>
        <dbReference type="ChEBI" id="CHEBI:29035"/>
        <label>3</label>
    </ligand>
</feature>
<feature type="binding site" evidence="2">
    <location>
        <position position="841"/>
    </location>
    <ligand>
        <name>ATP</name>
        <dbReference type="ChEBI" id="CHEBI:30616"/>
        <label>2</label>
    </ligand>
</feature>
<feature type="binding site" evidence="2">
    <location>
        <position position="841"/>
    </location>
    <ligand>
        <name>Mg(2+)</name>
        <dbReference type="ChEBI" id="CHEBI:18420"/>
        <label>3</label>
    </ligand>
</feature>
<feature type="binding site" evidence="2">
    <location>
        <position position="841"/>
    </location>
    <ligand>
        <name>Mg(2+)</name>
        <dbReference type="ChEBI" id="CHEBI:18420"/>
        <label>4</label>
    </ligand>
</feature>
<feature type="binding site" evidence="2">
    <location>
        <position position="841"/>
    </location>
    <ligand>
        <name>Mn(2+)</name>
        <dbReference type="ChEBI" id="CHEBI:29035"/>
        <label>3</label>
    </ligand>
</feature>
<feature type="binding site" evidence="2">
    <location>
        <position position="841"/>
    </location>
    <ligand>
        <name>Mn(2+)</name>
        <dbReference type="ChEBI" id="CHEBI:29035"/>
        <label>4</label>
    </ligand>
</feature>
<feature type="binding site" evidence="2">
    <location>
        <position position="843"/>
    </location>
    <ligand>
        <name>Mg(2+)</name>
        <dbReference type="ChEBI" id="CHEBI:18420"/>
        <label>4</label>
    </ligand>
</feature>
<feature type="binding site" evidence="2">
    <location>
        <position position="843"/>
    </location>
    <ligand>
        <name>Mn(2+)</name>
        <dbReference type="ChEBI" id="CHEBI:29035"/>
        <label>4</label>
    </ligand>
</feature>
<keyword id="KW-0028">Amino-acid biosynthesis</keyword>
<keyword id="KW-0055">Arginine biosynthesis</keyword>
<keyword id="KW-0067">ATP-binding</keyword>
<keyword id="KW-0436">Ligase</keyword>
<keyword id="KW-0460">Magnesium</keyword>
<keyword id="KW-0464">Manganese</keyword>
<keyword id="KW-0479">Metal-binding</keyword>
<keyword id="KW-0547">Nucleotide-binding</keyword>
<keyword id="KW-0665">Pyrimidine biosynthesis</keyword>
<keyword id="KW-1185">Reference proteome</keyword>
<keyword id="KW-0677">Repeat</keyword>
<organism>
    <name type="scientific">Yersinia pestis</name>
    <dbReference type="NCBI Taxonomy" id="632"/>
    <lineage>
        <taxon>Bacteria</taxon>
        <taxon>Pseudomonadati</taxon>
        <taxon>Pseudomonadota</taxon>
        <taxon>Gammaproteobacteria</taxon>
        <taxon>Enterobacterales</taxon>
        <taxon>Yersiniaceae</taxon>
        <taxon>Yersinia</taxon>
    </lineage>
</organism>
<sequence length="1077" mass="118244">MPKRTDIKSILILGAGPIVIGQACEFDYSGAQACKALREEGYRVILVNSNLATIMTDPEMADATYIEPIHWEVVRKIIEKERPDAVLPTMGGQTALNCALELERQGVLAEFGVTMIGATADAIDKAEDRRRFDIAMKKIGLDTARSGIAHNMEEALAVAADVGFPCIIRPSFTMGGTGGGIAYNREEFEEICERGLDLSPTKELLIDESLIGWKEYEMEVVRDKNDNCIIVCSIENFDAMGIHTGDSITVAPAQTLTDKEYQIMRNASMAVLREIGVETGGSNVQFSVNPKNGRLIVIEMNPRVSRSSALASKATGFPIAKIAAKLAVGYTLDELMNDITGGRTPASFEPSIDYVVTKIPRFNFEKFAGANDRLTTQMKSVGEVMAIGRTQQESLQKALRGLEVGATGFDPKVSLDDPEALTKIRRELKEAGAERIWYIADAFRAGMSVDGVFNLTNVDRWFLVQIEELVRLEESVAELGINGLTAEFMRHLKRKGFADARLAKLVGAAESEVRKLRYKYGLHPVYKRVDTCAAEFSTDTAYMYSTYEEECESNPTSDRPKVMVLGGGPNRIGQGIEFDYCCVHASLALREDGYETIMVNCNPETVSTDYDTSDRLYFESVTLEDVLEIVRIEKPQGVIVQYGGQTPLKLARELEAAGVPIIGTSPDAIDRAEDRERFQQAVNRLGLKQPANATVATIEQAVEKATGLGYPLVVRPSYVLGGRAMEIVYDEIDLRRYFQNAVSVSNDAPVLLDRFLDDAVEVDVDAICDGERVLIGGIMEHIEQAGVHSGDSACSLPAYTLSKEIQDVMRQQVEKLAFELCVRGLMNVQFAVKNNEVYLIEVNPRAARTVPFVSKATGMPLAKIAARVMVGQSLAEQGMLEEIIPPYYSVKEVVLPFNKFPGVDPILGPEMRSTGEVMGVGRTFAEAFSKAMLGSQSGMKKSGRALLSVREGDKHRVVDLAAKLLKQGFELDATHGTAVVLGEAGINPRLVNKVHEGRPHIQDRIKNGEYTYIVNTTAGRQAIEDSKLIRRSALQYKVHYDTTLNGGFATAMALNADPTDQVISVQEMHAKIKNMKA</sequence>
<name>CARB_YERPE</name>
<protein>
    <recommendedName>
        <fullName evidence="2">Carbamoyl phosphate synthase large chain</fullName>
        <ecNumber evidence="2">6.3.4.16</ecNumber>
        <ecNumber evidence="2">6.3.5.5</ecNumber>
    </recommendedName>
    <alternativeName>
        <fullName evidence="2">Carbamoyl phosphate synthetase ammonia chain</fullName>
    </alternativeName>
</protein>
<proteinExistence type="inferred from homology"/>
<gene>
    <name evidence="2" type="primary">carB</name>
    <name type="ordered locus">YPO0482</name>
    <name type="ordered locus">y3692</name>
    <name type="ordered locus">YP_3697</name>
</gene>
<dbReference type="EC" id="6.3.4.16" evidence="2"/>
<dbReference type="EC" id="6.3.5.5" evidence="2"/>
<dbReference type="EMBL" id="AL590842">
    <property type="protein sequence ID" value="CAL19162.1"/>
    <property type="molecule type" value="Genomic_DNA"/>
</dbReference>
<dbReference type="EMBL" id="AE009952">
    <property type="protein sequence ID" value="AAM87240.1"/>
    <property type="molecule type" value="Genomic_DNA"/>
</dbReference>
<dbReference type="EMBL" id="AE017042">
    <property type="protein sequence ID" value="AAS63845.1"/>
    <property type="molecule type" value="Genomic_DNA"/>
</dbReference>
<dbReference type="PIR" id="AH0059">
    <property type="entry name" value="AH0059"/>
</dbReference>
<dbReference type="RefSeq" id="WP_002210502.1">
    <property type="nucleotide sequence ID" value="NZ_WUCM01000116.1"/>
</dbReference>
<dbReference type="RefSeq" id="YP_002345555.1">
    <property type="nucleotide sequence ID" value="NC_003143.1"/>
</dbReference>
<dbReference type="SMR" id="Q8ZIL4"/>
<dbReference type="IntAct" id="Q8ZIL4">
    <property type="interactions" value="8"/>
</dbReference>
<dbReference type="STRING" id="214092.YPO0482"/>
<dbReference type="PaxDb" id="214092-YPO0482"/>
<dbReference type="EnsemblBacteria" id="AAS63845">
    <property type="protein sequence ID" value="AAS63845"/>
    <property type="gene ID" value="YP_3697"/>
</dbReference>
<dbReference type="GeneID" id="57974128"/>
<dbReference type="KEGG" id="ype:YPO0482"/>
<dbReference type="KEGG" id="ypk:y3692"/>
<dbReference type="KEGG" id="ypm:YP_3697"/>
<dbReference type="PATRIC" id="fig|214092.21.peg.730"/>
<dbReference type="eggNOG" id="COG0458">
    <property type="taxonomic scope" value="Bacteria"/>
</dbReference>
<dbReference type="HOGENOM" id="CLU_000513_1_0_6"/>
<dbReference type="OMA" id="FPFNKFP"/>
<dbReference type="OrthoDB" id="9804197at2"/>
<dbReference type="UniPathway" id="UPA00068">
    <property type="reaction ID" value="UER00171"/>
</dbReference>
<dbReference type="UniPathway" id="UPA00070">
    <property type="reaction ID" value="UER00115"/>
</dbReference>
<dbReference type="Proteomes" id="UP000000815">
    <property type="component" value="Chromosome"/>
</dbReference>
<dbReference type="Proteomes" id="UP000001019">
    <property type="component" value="Chromosome"/>
</dbReference>
<dbReference type="Proteomes" id="UP000002490">
    <property type="component" value="Chromosome"/>
</dbReference>
<dbReference type="GO" id="GO:0005737">
    <property type="term" value="C:cytoplasm"/>
    <property type="evidence" value="ECO:0000318"/>
    <property type="project" value="GO_Central"/>
</dbReference>
<dbReference type="GO" id="GO:0005524">
    <property type="term" value="F:ATP binding"/>
    <property type="evidence" value="ECO:0007669"/>
    <property type="project" value="UniProtKB-UniRule"/>
</dbReference>
<dbReference type="GO" id="GO:0004087">
    <property type="term" value="F:carbamoyl-phosphate synthase (ammonia) activity"/>
    <property type="evidence" value="ECO:0007669"/>
    <property type="project" value="RHEA"/>
</dbReference>
<dbReference type="GO" id="GO:0004088">
    <property type="term" value="F:carbamoyl-phosphate synthase (glutamine-hydrolyzing) activity"/>
    <property type="evidence" value="ECO:0007669"/>
    <property type="project" value="UniProtKB-UniRule"/>
</dbReference>
<dbReference type="GO" id="GO:0046872">
    <property type="term" value="F:metal ion binding"/>
    <property type="evidence" value="ECO:0007669"/>
    <property type="project" value="UniProtKB-KW"/>
</dbReference>
<dbReference type="GO" id="GO:0044205">
    <property type="term" value="P:'de novo' UMP biosynthetic process"/>
    <property type="evidence" value="ECO:0007669"/>
    <property type="project" value="UniProtKB-UniRule"/>
</dbReference>
<dbReference type="GO" id="GO:0006541">
    <property type="term" value="P:glutamine metabolic process"/>
    <property type="evidence" value="ECO:0000318"/>
    <property type="project" value="GO_Central"/>
</dbReference>
<dbReference type="GO" id="GO:0006526">
    <property type="term" value="P:L-arginine biosynthetic process"/>
    <property type="evidence" value="ECO:0007669"/>
    <property type="project" value="UniProtKB-UniRule"/>
</dbReference>
<dbReference type="CDD" id="cd01424">
    <property type="entry name" value="MGS_CPS_II"/>
    <property type="match status" value="1"/>
</dbReference>
<dbReference type="FunFam" id="1.10.1030.10:FF:000002">
    <property type="entry name" value="Carbamoyl-phosphate synthase large chain"/>
    <property type="match status" value="1"/>
</dbReference>
<dbReference type="FunFam" id="3.30.1490.20:FF:000001">
    <property type="entry name" value="Carbamoyl-phosphate synthase large chain"/>
    <property type="match status" value="1"/>
</dbReference>
<dbReference type="FunFam" id="3.30.470.20:FF:000007">
    <property type="entry name" value="Carbamoyl-phosphate synthase large chain"/>
    <property type="match status" value="1"/>
</dbReference>
<dbReference type="FunFam" id="3.30.470.20:FF:000013">
    <property type="entry name" value="Carbamoyl-phosphate synthase large chain"/>
    <property type="match status" value="1"/>
</dbReference>
<dbReference type="FunFam" id="3.40.50.1380:FF:000004">
    <property type="entry name" value="Carbamoyl-phosphate synthase large chain"/>
    <property type="match status" value="1"/>
</dbReference>
<dbReference type="FunFam" id="3.40.50.20:FF:000001">
    <property type="entry name" value="Carbamoyl-phosphate synthase large chain"/>
    <property type="match status" value="1"/>
</dbReference>
<dbReference type="FunFam" id="3.40.50.20:FF:000003">
    <property type="entry name" value="Carbamoyl-phosphate synthase large chain"/>
    <property type="match status" value="1"/>
</dbReference>
<dbReference type="Gene3D" id="3.40.50.20">
    <property type="match status" value="2"/>
</dbReference>
<dbReference type="Gene3D" id="3.30.470.20">
    <property type="entry name" value="ATP-grasp fold, B domain"/>
    <property type="match status" value="2"/>
</dbReference>
<dbReference type="Gene3D" id="1.10.1030.10">
    <property type="entry name" value="Carbamoyl-phosphate synthetase, large subunit oligomerisation domain"/>
    <property type="match status" value="1"/>
</dbReference>
<dbReference type="Gene3D" id="3.40.50.1380">
    <property type="entry name" value="Methylglyoxal synthase-like domain"/>
    <property type="match status" value="1"/>
</dbReference>
<dbReference type="HAMAP" id="MF_01210_A">
    <property type="entry name" value="CPSase_L_chain_A"/>
    <property type="match status" value="1"/>
</dbReference>
<dbReference type="HAMAP" id="MF_01210_B">
    <property type="entry name" value="CPSase_L_chain_B"/>
    <property type="match status" value="1"/>
</dbReference>
<dbReference type="InterPro" id="IPR011761">
    <property type="entry name" value="ATP-grasp"/>
</dbReference>
<dbReference type="InterPro" id="IPR006275">
    <property type="entry name" value="CarbamoylP_synth_lsu"/>
</dbReference>
<dbReference type="InterPro" id="IPR005480">
    <property type="entry name" value="CarbamoylP_synth_lsu_oligo"/>
</dbReference>
<dbReference type="InterPro" id="IPR036897">
    <property type="entry name" value="CarbamoylP_synth_lsu_oligo_sf"/>
</dbReference>
<dbReference type="InterPro" id="IPR005479">
    <property type="entry name" value="CbamoylP_synth_lsu-like_ATP-bd"/>
</dbReference>
<dbReference type="InterPro" id="IPR005483">
    <property type="entry name" value="CbamoylP_synth_lsu_CPSase_dom"/>
</dbReference>
<dbReference type="InterPro" id="IPR011607">
    <property type="entry name" value="MGS-like_dom"/>
</dbReference>
<dbReference type="InterPro" id="IPR036914">
    <property type="entry name" value="MGS-like_dom_sf"/>
</dbReference>
<dbReference type="InterPro" id="IPR033937">
    <property type="entry name" value="MGS_CPS_CarB"/>
</dbReference>
<dbReference type="InterPro" id="IPR016185">
    <property type="entry name" value="PreATP-grasp_dom_sf"/>
</dbReference>
<dbReference type="NCBIfam" id="TIGR01369">
    <property type="entry name" value="CPSaseII_lrg"/>
    <property type="match status" value="1"/>
</dbReference>
<dbReference type="NCBIfam" id="NF003671">
    <property type="entry name" value="PRK05294.1"/>
    <property type="match status" value="1"/>
</dbReference>
<dbReference type="NCBIfam" id="NF009455">
    <property type="entry name" value="PRK12815.1"/>
    <property type="match status" value="1"/>
</dbReference>
<dbReference type="PANTHER" id="PTHR11405:SF53">
    <property type="entry name" value="CARBAMOYL-PHOSPHATE SYNTHASE [AMMONIA], MITOCHONDRIAL"/>
    <property type="match status" value="1"/>
</dbReference>
<dbReference type="PANTHER" id="PTHR11405">
    <property type="entry name" value="CARBAMOYLTRANSFERASE FAMILY MEMBER"/>
    <property type="match status" value="1"/>
</dbReference>
<dbReference type="Pfam" id="PF02786">
    <property type="entry name" value="CPSase_L_D2"/>
    <property type="match status" value="2"/>
</dbReference>
<dbReference type="Pfam" id="PF02787">
    <property type="entry name" value="CPSase_L_D3"/>
    <property type="match status" value="1"/>
</dbReference>
<dbReference type="Pfam" id="PF02142">
    <property type="entry name" value="MGS"/>
    <property type="match status" value="1"/>
</dbReference>
<dbReference type="PRINTS" id="PR00098">
    <property type="entry name" value="CPSASE"/>
</dbReference>
<dbReference type="SMART" id="SM01096">
    <property type="entry name" value="CPSase_L_D3"/>
    <property type="match status" value="1"/>
</dbReference>
<dbReference type="SMART" id="SM00851">
    <property type="entry name" value="MGS"/>
    <property type="match status" value="1"/>
</dbReference>
<dbReference type="SUPFAM" id="SSF48108">
    <property type="entry name" value="Carbamoyl phosphate synthetase, large subunit connection domain"/>
    <property type="match status" value="1"/>
</dbReference>
<dbReference type="SUPFAM" id="SSF56059">
    <property type="entry name" value="Glutathione synthetase ATP-binding domain-like"/>
    <property type="match status" value="2"/>
</dbReference>
<dbReference type="SUPFAM" id="SSF52335">
    <property type="entry name" value="Methylglyoxal synthase-like"/>
    <property type="match status" value="1"/>
</dbReference>
<dbReference type="SUPFAM" id="SSF52440">
    <property type="entry name" value="PreATP-grasp domain"/>
    <property type="match status" value="2"/>
</dbReference>
<dbReference type="PROSITE" id="PS50975">
    <property type="entry name" value="ATP_GRASP"/>
    <property type="match status" value="2"/>
</dbReference>
<dbReference type="PROSITE" id="PS00866">
    <property type="entry name" value="CPSASE_1"/>
    <property type="match status" value="2"/>
</dbReference>
<dbReference type="PROSITE" id="PS00867">
    <property type="entry name" value="CPSASE_2"/>
    <property type="match status" value="2"/>
</dbReference>
<dbReference type="PROSITE" id="PS51855">
    <property type="entry name" value="MGS"/>
    <property type="match status" value="1"/>
</dbReference>
<accession>Q8ZIL4</accession>
<accession>Q0WJI3</accession>
<reference key="1">
    <citation type="journal article" date="2001" name="Nature">
        <title>Genome sequence of Yersinia pestis, the causative agent of plague.</title>
        <authorList>
            <person name="Parkhill J."/>
            <person name="Wren B.W."/>
            <person name="Thomson N.R."/>
            <person name="Titball R.W."/>
            <person name="Holden M.T.G."/>
            <person name="Prentice M.B."/>
            <person name="Sebaihia M."/>
            <person name="James K.D."/>
            <person name="Churcher C.M."/>
            <person name="Mungall K.L."/>
            <person name="Baker S."/>
            <person name="Basham D."/>
            <person name="Bentley S.D."/>
            <person name="Brooks K."/>
            <person name="Cerdeno-Tarraga A.-M."/>
            <person name="Chillingworth T."/>
            <person name="Cronin A."/>
            <person name="Davies R.M."/>
            <person name="Davis P."/>
            <person name="Dougan G."/>
            <person name="Feltwell T."/>
            <person name="Hamlin N."/>
            <person name="Holroyd S."/>
            <person name="Jagels K."/>
            <person name="Karlyshev A.V."/>
            <person name="Leather S."/>
            <person name="Moule S."/>
            <person name="Oyston P.C.F."/>
            <person name="Quail M.A."/>
            <person name="Rutherford K.M."/>
            <person name="Simmonds M."/>
            <person name="Skelton J."/>
            <person name="Stevens K."/>
            <person name="Whitehead S."/>
            <person name="Barrell B.G."/>
        </authorList>
    </citation>
    <scope>NUCLEOTIDE SEQUENCE [LARGE SCALE GENOMIC DNA]</scope>
    <source>
        <strain>CO-92 / Biovar Orientalis</strain>
    </source>
</reference>
<reference key="2">
    <citation type="journal article" date="2002" name="J. Bacteriol.">
        <title>Genome sequence of Yersinia pestis KIM.</title>
        <authorList>
            <person name="Deng W."/>
            <person name="Burland V."/>
            <person name="Plunkett G. III"/>
            <person name="Boutin A."/>
            <person name="Mayhew G.F."/>
            <person name="Liss P."/>
            <person name="Perna N.T."/>
            <person name="Rose D.J."/>
            <person name="Mau B."/>
            <person name="Zhou S."/>
            <person name="Schwartz D.C."/>
            <person name="Fetherston J.D."/>
            <person name="Lindler L.E."/>
            <person name="Brubaker R.R."/>
            <person name="Plano G.V."/>
            <person name="Straley S.C."/>
            <person name="McDonough K.A."/>
            <person name="Nilles M.L."/>
            <person name="Matson J.S."/>
            <person name="Blattner F.R."/>
            <person name="Perry R.D."/>
        </authorList>
    </citation>
    <scope>NUCLEOTIDE SEQUENCE [LARGE SCALE GENOMIC DNA]</scope>
    <source>
        <strain>KIM10+ / Biovar Mediaevalis</strain>
    </source>
</reference>
<reference key="3">
    <citation type="journal article" date="2004" name="DNA Res.">
        <title>Complete genome sequence of Yersinia pestis strain 91001, an isolate avirulent to humans.</title>
        <authorList>
            <person name="Song Y."/>
            <person name="Tong Z."/>
            <person name="Wang J."/>
            <person name="Wang L."/>
            <person name="Guo Z."/>
            <person name="Han Y."/>
            <person name="Zhang J."/>
            <person name="Pei D."/>
            <person name="Zhou D."/>
            <person name="Qin H."/>
            <person name="Pang X."/>
            <person name="Han Y."/>
            <person name="Zhai J."/>
            <person name="Li M."/>
            <person name="Cui B."/>
            <person name="Qi Z."/>
            <person name="Jin L."/>
            <person name="Dai R."/>
            <person name="Chen F."/>
            <person name="Li S."/>
            <person name="Ye C."/>
            <person name="Du Z."/>
            <person name="Lin W."/>
            <person name="Wang J."/>
            <person name="Yu J."/>
            <person name="Yang H."/>
            <person name="Wang J."/>
            <person name="Huang P."/>
            <person name="Yang R."/>
        </authorList>
    </citation>
    <scope>NUCLEOTIDE SEQUENCE [LARGE SCALE GENOMIC DNA]</scope>
    <source>
        <strain>91001 / Biovar Mediaevalis</strain>
    </source>
</reference>